<geneLocation type="mitochondrion"/>
<feature type="chain" id="PRO_0000061219" description="Cytochrome b">
    <location>
        <begin position="1"/>
        <end position="379"/>
    </location>
</feature>
<feature type="transmembrane region" description="Helical" evidence="2">
    <location>
        <begin position="33"/>
        <end position="53"/>
    </location>
</feature>
<feature type="transmembrane region" description="Helical" evidence="2">
    <location>
        <begin position="77"/>
        <end position="98"/>
    </location>
</feature>
<feature type="transmembrane region" description="Helical" evidence="2">
    <location>
        <begin position="113"/>
        <end position="133"/>
    </location>
</feature>
<feature type="transmembrane region" description="Helical" evidence="2">
    <location>
        <begin position="178"/>
        <end position="198"/>
    </location>
</feature>
<feature type="transmembrane region" description="Helical" evidence="2">
    <location>
        <begin position="226"/>
        <end position="246"/>
    </location>
</feature>
<feature type="transmembrane region" description="Helical" evidence="2">
    <location>
        <begin position="288"/>
        <end position="308"/>
    </location>
</feature>
<feature type="transmembrane region" description="Helical" evidence="2">
    <location>
        <begin position="320"/>
        <end position="340"/>
    </location>
</feature>
<feature type="transmembrane region" description="Helical" evidence="2">
    <location>
        <begin position="347"/>
        <end position="367"/>
    </location>
</feature>
<feature type="binding site" description="axial binding residue" evidence="2">
    <location>
        <position position="83"/>
    </location>
    <ligand>
        <name>heme b</name>
        <dbReference type="ChEBI" id="CHEBI:60344"/>
        <label>b562</label>
    </ligand>
    <ligandPart>
        <name>Fe</name>
        <dbReference type="ChEBI" id="CHEBI:18248"/>
    </ligandPart>
</feature>
<feature type="binding site" description="axial binding residue" evidence="2">
    <location>
        <position position="97"/>
    </location>
    <ligand>
        <name>heme b</name>
        <dbReference type="ChEBI" id="CHEBI:60344"/>
        <label>b566</label>
    </ligand>
    <ligandPart>
        <name>Fe</name>
        <dbReference type="ChEBI" id="CHEBI:18248"/>
    </ligandPart>
</feature>
<feature type="binding site" description="axial binding residue" evidence="2">
    <location>
        <position position="182"/>
    </location>
    <ligand>
        <name>heme b</name>
        <dbReference type="ChEBI" id="CHEBI:60344"/>
        <label>b562</label>
    </ligand>
    <ligandPart>
        <name>Fe</name>
        <dbReference type="ChEBI" id="CHEBI:18248"/>
    </ligandPart>
</feature>
<feature type="binding site" description="axial binding residue" evidence="2">
    <location>
        <position position="196"/>
    </location>
    <ligand>
        <name>heme b</name>
        <dbReference type="ChEBI" id="CHEBI:60344"/>
        <label>b566</label>
    </ligand>
    <ligandPart>
        <name>Fe</name>
        <dbReference type="ChEBI" id="CHEBI:18248"/>
    </ligandPart>
</feature>
<feature type="binding site" evidence="2">
    <location>
        <position position="201"/>
    </location>
    <ligand>
        <name>a ubiquinone</name>
        <dbReference type="ChEBI" id="CHEBI:16389"/>
    </ligand>
</feature>
<feature type="sequence conflict" description="In Ref. 2; BAA13738." evidence="5" ref="2">
    <original>F</original>
    <variation>I</variation>
    <location>
        <position position="4"/>
    </location>
</feature>
<feature type="sequence conflict" description="In Ref. 2; BAA13738." evidence="5" ref="2">
    <original>M</original>
    <variation>I</variation>
    <location>
        <position position="11"/>
    </location>
</feature>
<feature type="sequence conflict" description="In Ref. 2; BAA13738." evidence="5" ref="2">
    <original>L</original>
    <variation>M</variation>
    <location>
        <position position="60"/>
    </location>
</feature>
<feature type="sequence conflict" description="In Ref. 2; BAA13738." evidence="5" ref="2">
    <original>M</original>
    <variation>I</variation>
    <location>
        <position position="102"/>
    </location>
</feature>
<feature type="sequence conflict" description="In Ref. 2; BAA13738." evidence="5" ref="2">
    <original>M</original>
    <variation>T</variation>
    <location>
        <position position="110"/>
    </location>
</feature>
<keyword id="KW-0249">Electron transport</keyword>
<keyword id="KW-0349">Heme</keyword>
<keyword id="KW-0408">Iron</keyword>
<keyword id="KW-0472">Membrane</keyword>
<keyword id="KW-0479">Metal-binding</keyword>
<keyword id="KW-0496">Mitochondrion</keyword>
<keyword id="KW-0999">Mitochondrion inner membrane</keyword>
<keyword id="KW-0679">Respiratory chain</keyword>
<keyword id="KW-0812">Transmembrane</keyword>
<keyword id="KW-1133">Transmembrane helix</keyword>
<keyword id="KW-0813">Transport</keyword>
<keyword id="KW-0830">Ubiquinone</keyword>
<comment type="function">
    <text evidence="2">Component of the ubiquinol-cytochrome c reductase complex (complex III or cytochrome b-c1 complex) that is part of the mitochondrial respiratory chain. The b-c1 complex mediates electron transfer from ubiquinol to cytochrome c. Contributes to the generation of a proton gradient across the mitochondrial membrane that is then used for ATP synthesis.</text>
</comment>
<comment type="cofactor">
    <cofactor evidence="2">
        <name>heme b</name>
        <dbReference type="ChEBI" id="CHEBI:60344"/>
    </cofactor>
    <text evidence="2">Binds 2 heme b groups non-covalently.</text>
</comment>
<comment type="subunit">
    <text evidence="2">The cytochrome bc1 complex contains 11 subunits: 3 respiratory subunits (MT-CYB, CYC1 and UQCRFS1), 2 core proteins (UQCRC1 and UQCRC2) and 6 low-molecular weight proteins (UQCRH/QCR6, UQCRB/QCR7, UQCRQ/QCR8, UQCR10/QCR9, UQCR11/QCR10 and a cleavage product of UQCRFS1). This cytochrome bc1 complex then forms a dimer.</text>
</comment>
<comment type="subcellular location">
    <subcellularLocation>
        <location evidence="2">Mitochondrion inner membrane</location>
        <topology evidence="2">Multi-pass membrane protein</topology>
    </subcellularLocation>
</comment>
<comment type="miscellaneous">
    <text evidence="1">Heme 1 (or BL or b562) is low-potential and absorbs at about 562 nm, and heme 2 (or BH or b566) is high-potential and absorbs at about 566 nm.</text>
</comment>
<comment type="similarity">
    <text evidence="3 4">Belongs to the cytochrome b family.</text>
</comment>
<comment type="caution">
    <text evidence="2">The full-length protein contains only eight transmembrane helices, not nine as predicted by bioinformatics tools.</text>
</comment>
<protein>
    <recommendedName>
        <fullName>Cytochrome b</fullName>
    </recommendedName>
    <alternativeName>
        <fullName>Complex III subunit 3</fullName>
    </alternativeName>
    <alternativeName>
        <fullName>Complex III subunit III</fullName>
    </alternativeName>
    <alternativeName>
        <fullName>Cytochrome b-c1 complex subunit 3</fullName>
    </alternativeName>
    <alternativeName>
        <fullName>Ubiquinol-cytochrome-c reductase complex cytochrome b subunit</fullName>
    </alternativeName>
</protein>
<dbReference type="EMBL" id="AJ225117">
    <property type="protein sequence ID" value="CAA12404.1"/>
    <property type="molecule type" value="Genomic_DNA"/>
</dbReference>
<dbReference type="EMBL" id="D88999">
    <property type="protein sequence ID" value="BAA13738.1"/>
    <property type="molecule type" value="Genomic_DNA"/>
</dbReference>
<dbReference type="SMR" id="P92651"/>
<dbReference type="GO" id="GO:0005743">
    <property type="term" value="C:mitochondrial inner membrane"/>
    <property type="evidence" value="ECO:0007669"/>
    <property type="project" value="UniProtKB-SubCell"/>
</dbReference>
<dbReference type="GO" id="GO:0045275">
    <property type="term" value="C:respiratory chain complex III"/>
    <property type="evidence" value="ECO:0007669"/>
    <property type="project" value="InterPro"/>
</dbReference>
<dbReference type="GO" id="GO:0046872">
    <property type="term" value="F:metal ion binding"/>
    <property type="evidence" value="ECO:0007669"/>
    <property type="project" value="UniProtKB-KW"/>
</dbReference>
<dbReference type="GO" id="GO:0008121">
    <property type="term" value="F:ubiquinol-cytochrome-c reductase activity"/>
    <property type="evidence" value="ECO:0007669"/>
    <property type="project" value="InterPro"/>
</dbReference>
<dbReference type="GO" id="GO:0006122">
    <property type="term" value="P:mitochondrial electron transport, ubiquinol to cytochrome c"/>
    <property type="evidence" value="ECO:0007669"/>
    <property type="project" value="TreeGrafter"/>
</dbReference>
<dbReference type="CDD" id="cd00290">
    <property type="entry name" value="cytochrome_b_C"/>
    <property type="match status" value="1"/>
</dbReference>
<dbReference type="CDD" id="cd00284">
    <property type="entry name" value="Cytochrome_b_N"/>
    <property type="match status" value="1"/>
</dbReference>
<dbReference type="FunFam" id="1.20.810.10:FF:000002">
    <property type="entry name" value="Cytochrome b"/>
    <property type="match status" value="1"/>
</dbReference>
<dbReference type="Gene3D" id="1.20.810.10">
    <property type="entry name" value="Cytochrome Bc1 Complex, Chain C"/>
    <property type="match status" value="1"/>
</dbReference>
<dbReference type="InterPro" id="IPR005798">
    <property type="entry name" value="Cyt_b/b6_C"/>
</dbReference>
<dbReference type="InterPro" id="IPR036150">
    <property type="entry name" value="Cyt_b/b6_C_sf"/>
</dbReference>
<dbReference type="InterPro" id="IPR005797">
    <property type="entry name" value="Cyt_b/b6_N"/>
</dbReference>
<dbReference type="InterPro" id="IPR027387">
    <property type="entry name" value="Cytb/b6-like_sf"/>
</dbReference>
<dbReference type="InterPro" id="IPR030689">
    <property type="entry name" value="Cytochrome_b"/>
</dbReference>
<dbReference type="InterPro" id="IPR048260">
    <property type="entry name" value="Cytochrome_b_C_euk/bac"/>
</dbReference>
<dbReference type="InterPro" id="IPR048259">
    <property type="entry name" value="Cytochrome_b_N_euk/bac"/>
</dbReference>
<dbReference type="InterPro" id="IPR016174">
    <property type="entry name" value="Di-haem_cyt_TM"/>
</dbReference>
<dbReference type="PANTHER" id="PTHR19271">
    <property type="entry name" value="CYTOCHROME B"/>
    <property type="match status" value="1"/>
</dbReference>
<dbReference type="PANTHER" id="PTHR19271:SF16">
    <property type="entry name" value="CYTOCHROME B"/>
    <property type="match status" value="1"/>
</dbReference>
<dbReference type="Pfam" id="PF00032">
    <property type="entry name" value="Cytochrom_B_C"/>
    <property type="match status" value="1"/>
</dbReference>
<dbReference type="Pfam" id="PF00033">
    <property type="entry name" value="Cytochrome_B"/>
    <property type="match status" value="1"/>
</dbReference>
<dbReference type="PIRSF" id="PIRSF038885">
    <property type="entry name" value="COB"/>
    <property type="match status" value="1"/>
</dbReference>
<dbReference type="SUPFAM" id="SSF81648">
    <property type="entry name" value="a domain/subunit of cytochrome bc1 complex (Ubiquinol-cytochrome c reductase)"/>
    <property type="match status" value="1"/>
</dbReference>
<dbReference type="SUPFAM" id="SSF81342">
    <property type="entry name" value="Transmembrane di-heme cytochromes"/>
    <property type="match status" value="1"/>
</dbReference>
<dbReference type="PROSITE" id="PS51003">
    <property type="entry name" value="CYTB_CTER"/>
    <property type="match status" value="1"/>
</dbReference>
<dbReference type="PROSITE" id="PS51002">
    <property type="entry name" value="CYTB_NTER"/>
    <property type="match status" value="1"/>
</dbReference>
<evidence type="ECO:0000250" key="1"/>
<evidence type="ECO:0000250" key="2">
    <source>
        <dbReference type="UniProtKB" id="P00157"/>
    </source>
</evidence>
<evidence type="ECO:0000255" key="3">
    <source>
        <dbReference type="PROSITE-ProRule" id="PRU00967"/>
    </source>
</evidence>
<evidence type="ECO:0000255" key="4">
    <source>
        <dbReference type="PROSITE-ProRule" id="PRU00968"/>
    </source>
</evidence>
<evidence type="ECO:0000305" key="5"/>
<reference key="1">
    <citation type="journal article" date="1999" name="J. Mammal. Evol.">
        <title>Systematic position of the African dormouse Graphiurus (Rodentia, Gliridae) assessed from cytochrome b and 12s rRNA mitochondrial genes.</title>
        <authorList>
            <person name="Bentz S."/>
            <person name="Montgelard C."/>
        </authorList>
    </citation>
    <scope>NUCLEOTIDE SEQUENCE [GENOMIC DNA]</scope>
    <source>
        <strain>Isolate E-4897</strain>
    </source>
</reference>
<reference key="2">
    <citation type="journal article" date="1997" name="Zool. Sci.">
        <title>Phylogenetic position and geographic differentiation of the Japanese dormouse, Glirulus japonicus, revealed by variations among rDNA, mtDNA and the Sry gene.</title>
        <authorList>
            <person name="Suzuki H."/>
            <person name="Minato S."/>
            <person name="Sakurai S."/>
            <person name="Tsuchiya K."/>
            <person name="Fokin I.M."/>
        </authorList>
    </citation>
    <scope>NUCLEOTIDE SEQUENCE [GENOMIC DNA] OF 1-134</scope>
    <source>
        <strain>Isolate HS0441 / Russia</strain>
        <tissue>Liver</tissue>
    </source>
</reference>
<organism>
    <name type="scientific">Muscardinus avellanarius</name>
    <name type="common">Hazel mouse</name>
    <name type="synonym">Common dormouse</name>
    <dbReference type="NCBI Taxonomy" id="39082"/>
    <lineage>
        <taxon>Eukaryota</taxon>
        <taxon>Metazoa</taxon>
        <taxon>Chordata</taxon>
        <taxon>Craniata</taxon>
        <taxon>Vertebrata</taxon>
        <taxon>Euteleostomi</taxon>
        <taxon>Mammalia</taxon>
        <taxon>Eutheria</taxon>
        <taxon>Euarchontoglires</taxon>
        <taxon>Glires</taxon>
        <taxon>Rodentia</taxon>
        <taxon>Sciuromorpha</taxon>
        <taxon>Gliridae</taxon>
        <taxon>Muscardinus</taxon>
    </lineage>
</organism>
<gene>
    <name type="primary">MT-CYB</name>
    <name type="synonym">COB</name>
    <name type="synonym">CYTB</name>
    <name type="synonym">MTCYB</name>
</gene>
<accession>P92651</accession>
<accession>Q9T9Z3</accession>
<name>CYB_MUSAV</name>
<proteinExistence type="inferred from homology"/>
<sequence length="379" mass="42838">MTNFRKSHPLMKIINDSFIDLPTPSNISAWWNFGSLLGACLGIQILTGLFLAMHYTSDTLTAFSSVTHICRDVNYGWLIRYMHANGASMFFICLFLHIGRGMYYGSYMFMETWNIGIILLFAVMATAFMGYVLPWGQMSFWGATVITNLLSAIPYIGTTLVEWIWGGFSVDKATLTRFFAFHFILPFIVAALVMVHLLFLHETGSNNPSGLNSDTDKIPFHPYFTIKDILGLLLLISILMSLVLFSPDLLGDPDNYTPANPLSTPPHIKPEWYFLFAYAILRSIPNKLGGVLALVFSILILAIFPMIQISKQRSMMFRPLSQLLFWILTADLFTLTWIGGQPVEHPFIIIGQLASVLYFSIILVFLPTTSLIENKLLKW</sequence>